<feature type="chain" id="PRO_0000347892" description="Alanine--tRNA ligase">
    <location>
        <begin position="1"/>
        <end position="909"/>
    </location>
</feature>
<feature type="binding site" evidence="1">
    <location>
        <position position="600"/>
    </location>
    <ligand>
        <name>Zn(2+)</name>
        <dbReference type="ChEBI" id="CHEBI:29105"/>
    </ligand>
</feature>
<feature type="binding site" evidence="1">
    <location>
        <position position="604"/>
    </location>
    <ligand>
        <name>Zn(2+)</name>
        <dbReference type="ChEBI" id="CHEBI:29105"/>
    </ligand>
</feature>
<feature type="binding site" evidence="1">
    <location>
        <position position="704"/>
    </location>
    <ligand>
        <name>Zn(2+)</name>
        <dbReference type="ChEBI" id="CHEBI:29105"/>
    </ligand>
</feature>
<feature type="binding site" evidence="1">
    <location>
        <position position="708"/>
    </location>
    <ligand>
        <name>Zn(2+)</name>
        <dbReference type="ChEBI" id="CHEBI:29105"/>
    </ligand>
</feature>
<protein>
    <recommendedName>
        <fullName evidence="1">Alanine--tRNA ligase</fullName>
        <ecNumber evidence="1">6.1.1.7</ecNumber>
    </recommendedName>
    <alternativeName>
        <fullName evidence="1">Alanyl-tRNA synthetase</fullName>
        <shortName evidence="1">AlaRS</shortName>
    </alternativeName>
</protein>
<evidence type="ECO:0000255" key="1">
    <source>
        <dbReference type="HAMAP-Rule" id="MF_00036"/>
    </source>
</evidence>
<keyword id="KW-0030">Aminoacyl-tRNA synthetase</keyword>
<keyword id="KW-0067">ATP-binding</keyword>
<keyword id="KW-0963">Cytoplasm</keyword>
<keyword id="KW-0436">Ligase</keyword>
<keyword id="KW-0479">Metal-binding</keyword>
<keyword id="KW-0547">Nucleotide-binding</keyword>
<keyword id="KW-0648">Protein biosynthesis</keyword>
<keyword id="KW-1185">Reference proteome</keyword>
<keyword id="KW-0694">RNA-binding</keyword>
<keyword id="KW-0820">tRNA-binding</keyword>
<keyword id="KW-0862">Zinc</keyword>
<sequence>MVEEEFMNEFLKKTGYQVYKCKKCGERFWSLVPRDTCPDRPCSKYDFLYNEYKGVPPLTFDEARRKFIEFFTSHGHGYVDPYPVLARWRNDLYLTIASIIVFQPAVTEGIVDPPYNPLVIVQPSVRLEDIDNVGLTFGRHLTSFEMGGHHAFNKKDQYVYWVNETLQYAFDFFTKIIGIEPENIVFKESWWEGGGNAGPAYEVLVDGLELATLVFMKYKIVNGKKVRNPVLVVDTGYGIERIAWFTQRTPTAFHTIFSSLLETYKNILGIDEPPYDVLKKIVYLLSDKEIEDVYMLNKYLEEIDYSEYYKSLVDTINLYTALDHVKTLSLMLSDGIVSSNTGEGYLARLVIRRLLRTLIRLGIKVSTLEDIVLELIDKQAKYWKGRYVYDKFHRRLDYILDVMSYETRKYIDIVTRGIREVDRFIKKKKKITFDDLIQIYDSKGIPPEIVVERAKHYGQEIRVPSNFYSLIAARHGGSQALIKEKEHELPDEIVEWASKHDPTKKLFHENPYLRRASAKVLDSLNEYVIFDQTIFYPRAGGQDHDKGYVILGNEHIPVKHVYKVGEVIVHQLATKRRLVPGTQVELVIDWYNRYRLMRHHTATHIVLGAARKVLGEHVWQAGAEKTVEKARLDITHYKSLSDEEIRKIEELANKVIDERIDLKFYFLPKFEAEKRFGLRIYQGGAVYSPILRIVEIPGWDAEACFGTHVYNTSEIGGIKIIKAEKIQDGVIRLEYIASTRLPEYISDLQKEVDKALKFLGAKGLPISIVAKKVSEELDKYKTLLIQYRRLFKEILLKHLLEEALEICGLKTVVIEKQLEDEQLYKSIIEDLSLKKRVLTIYVSDKFVEIAIHPDEANNRKLDLRKLVEILQNMGGRGGGKPDHIYIKIKEPKQIVKLIVEAITNLLCKA</sequence>
<dbReference type="EC" id="6.1.1.7" evidence="1"/>
<dbReference type="EMBL" id="CP000575">
    <property type="protein sequence ID" value="ABN70193.1"/>
    <property type="molecule type" value="Genomic_DNA"/>
</dbReference>
<dbReference type="RefSeq" id="WP_011839384.1">
    <property type="nucleotide sequence ID" value="NC_009033.1"/>
</dbReference>
<dbReference type="SMR" id="A3DNI3"/>
<dbReference type="STRING" id="399550.Smar_1097"/>
<dbReference type="GeneID" id="4907669"/>
<dbReference type="KEGG" id="smr:Smar_1097"/>
<dbReference type="eggNOG" id="arCOG01255">
    <property type="taxonomic scope" value="Archaea"/>
</dbReference>
<dbReference type="HOGENOM" id="CLU_004485_4_0_2"/>
<dbReference type="OrthoDB" id="7506at2157"/>
<dbReference type="Proteomes" id="UP000000254">
    <property type="component" value="Chromosome"/>
</dbReference>
<dbReference type="GO" id="GO:0005737">
    <property type="term" value="C:cytoplasm"/>
    <property type="evidence" value="ECO:0007669"/>
    <property type="project" value="UniProtKB-SubCell"/>
</dbReference>
<dbReference type="GO" id="GO:0004813">
    <property type="term" value="F:alanine-tRNA ligase activity"/>
    <property type="evidence" value="ECO:0007669"/>
    <property type="project" value="UniProtKB-UniRule"/>
</dbReference>
<dbReference type="GO" id="GO:0002161">
    <property type="term" value="F:aminoacyl-tRNA deacylase activity"/>
    <property type="evidence" value="ECO:0007669"/>
    <property type="project" value="TreeGrafter"/>
</dbReference>
<dbReference type="GO" id="GO:0005524">
    <property type="term" value="F:ATP binding"/>
    <property type="evidence" value="ECO:0007669"/>
    <property type="project" value="UniProtKB-UniRule"/>
</dbReference>
<dbReference type="GO" id="GO:0000049">
    <property type="term" value="F:tRNA binding"/>
    <property type="evidence" value="ECO:0007669"/>
    <property type="project" value="UniProtKB-KW"/>
</dbReference>
<dbReference type="GO" id="GO:0008270">
    <property type="term" value="F:zinc ion binding"/>
    <property type="evidence" value="ECO:0007669"/>
    <property type="project" value="UniProtKB-UniRule"/>
</dbReference>
<dbReference type="GO" id="GO:0006419">
    <property type="term" value="P:alanyl-tRNA aminoacylation"/>
    <property type="evidence" value="ECO:0007669"/>
    <property type="project" value="UniProtKB-UniRule"/>
</dbReference>
<dbReference type="FunFam" id="3.30.980.10:FF:000004">
    <property type="entry name" value="Alanine--tRNA ligase, cytoplasmic"/>
    <property type="match status" value="1"/>
</dbReference>
<dbReference type="Gene3D" id="2.40.30.130">
    <property type="match status" value="1"/>
</dbReference>
<dbReference type="Gene3D" id="3.30.54.20">
    <property type="match status" value="1"/>
</dbReference>
<dbReference type="Gene3D" id="3.30.930.10">
    <property type="entry name" value="Bira Bifunctional Protein, Domain 2"/>
    <property type="match status" value="1"/>
</dbReference>
<dbReference type="Gene3D" id="3.30.980.10">
    <property type="entry name" value="Threonyl-trna Synthetase, Chain A, domain 2"/>
    <property type="match status" value="1"/>
</dbReference>
<dbReference type="HAMAP" id="MF_00036_A">
    <property type="entry name" value="Ala_tRNA_synth_A"/>
    <property type="match status" value="1"/>
</dbReference>
<dbReference type="InterPro" id="IPR045864">
    <property type="entry name" value="aa-tRNA-synth_II/BPL/LPL"/>
</dbReference>
<dbReference type="InterPro" id="IPR002318">
    <property type="entry name" value="Ala-tRNA-lgiase_IIc"/>
</dbReference>
<dbReference type="InterPro" id="IPR018162">
    <property type="entry name" value="Ala-tRNA-ligase_IIc_anticod-bd"/>
</dbReference>
<dbReference type="InterPro" id="IPR018165">
    <property type="entry name" value="Ala-tRNA-synth_IIc_core"/>
</dbReference>
<dbReference type="InterPro" id="IPR018164">
    <property type="entry name" value="Ala-tRNA-synth_IIc_N"/>
</dbReference>
<dbReference type="InterPro" id="IPR022429">
    <property type="entry name" value="Ala-tRNA_lgiase_arc"/>
</dbReference>
<dbReference type="InterPro" id="IPR050058">
    <property type="entry name" value="Ala-tRNA_ligase"/>
</dbReference>
<dbReference type="InterPro" id="IPR018163">
    <property type="entry name" value="Thr/Ala-tRNA-synth_IIc_edit"/>
</dbReference>
<dbReference type="InterPro" id="IPR009000">
    <property type="entry name" value="Transl_B-barrel_sf"/>
</dbReference>
<dbReference type="InterPro" id="IPR012947">
    <property type="entry name" value="tRNA_SAD"/>
</dbReference>
<dbReference type="NCBIfam" id="TIGR03683">
    <property type="entry name" value="A-tRNA_syn_arch"/>
    <property type="match status" value="1"/>
</dbReference>
<dbReference type="NCBIfam" id="TIGR00344">
    <property type="entry name" value="alaS"/>
    <property type="match status" value="1"/>
</dbReference>
<dbReference type="PANTHER" id="PTHR11777:SF9">
    <property type="entry name" value="ALANINE--TRNA LIGASE, CYTOPLASMIC"/>
    <property type="match status" value="1"/>
</dbReference>
<dbReference type="PANTHER" id="PTHR11777">
    <property type="entry name" value="ALANYL-TRNA SYNTHETASE"/>
    <property type="match status" value="1"/>
</dbReference>
<dbReference type="Pfam" id="PF01411">
    <property type="entry name" value="tRNA-synt_2c"/>
    <property type="match status" value="1"/>
</dbReference>
<dbReference type="Pfam" id="PF07973">
    <property type="entry name" value="tRNA_SAD"/>
    <property type="match status" value="1"/>
</dbReference>
<dbReference type="PRINTS" id="PR00980">
    <property type="entry name" value="TRNASYNTHALA"/>
</dbReference>
<dbReference type="SMART" id="SM00863">
    <property type="entry name" value="tRNA_SAD"/>
    <property type="match status" value="1"/>
</dbReference>
<dbReference type="SUPFAM" id="SSF55681">
    <property type="entry name" value="Class II aaRS and biotin synthetases"/>
    <property type="match status" value="1"/>
</dbReference>
<dbReference type="SUPFAM" id="SSF101353">
    <property type="entry name" value="Putative anticodon-binding domain of alanyl-tRNA synthetase (AlaRS)"/>
    <property type="match status" value="1"/>
</dbReference>
<dbReference type="SUPFAM" id="SSF55186">
    <property type="entry name" value="ThrRS/AlaRS common domain"/>
    <property type="match status" value="1"/>
</dbReference>
<dbReference type="SUPFAM" id="SSF50447">
    <property type="entry name" value="Translation proteins"/>
    <property type="match status" value="1"/>
</dbReference>
<dbReference type="PROSITE" id="PS50860">
    <property type="entry name" value="AA_TRNA_LIGASE_II_ALA"/>
    <property type="match status" value="1"/>
</dbReference>
<accession>A3DNI3</accession>
<reference key="1">
    <citation type="journal article" date="2009" name="BMC Genomics">
        <title>The complete genome sequence of Staphylothermus marinus reveals differences in sulfur metabolism among heterotrophic Crenarchaeota.</title>
        <authorList>
            <person name="Anderson I.J."/>
            <person name="Dharmarajan L."/>
            <person name="Rodriguez J."/>
            <person name="Hooper S."/>
            <person name="Porat I."/>
            <person name="Ulrich L.E."/>
            <person name="Elkins J.G."/>
            <person name="Mavromatis K."/>
            <person name="Sun H."/>
            <person name="Land M."/>
            <person name="Lapidus A."/>
            <person name="Lucas S."/>
            <person name="Barry K."/>
            <person name="Huber H."/>
            <person name="Zhulin I.B."/>
            <person name="Whitman W.B."/>
            <person name="Mukhopadhyay B."/>
            <person name="Woese C."/>
            <person name="Bristow J."/>
            <person name="Kyrpides N."/>
        </authorList>
    </citation>
    <scope>NUCLEOTIDE SEQUENCE [LARGE SCALE GENOMIC DNA]</scope>
    <source>
        <strain>ATCC 43588 / DSM 3639 / JCM 9404 / F1</strain>
    </source>
</reference>
<reference key="2">
    <citation type="journal article" date="2009" name="Stand. Genomic Sci.">
        <title>Complete genome sequence of Staphylothermus marinus Stetter and Fiala 1986 type strain F1.</title>
        <authorList>
            <person name="Anderson I.J."/>
            <person name="Sun H."/>
            <person name="Lapidus A."/>
            <person name="Copeland A."/>
            <person name="Glavina Del Rio T."/>
            <person name="Tice H."/>
            <person name="Dalin E."/>
            <person name="Lucas S."/>
            <person name="Barry K."/>
            <person name="Land M."/>
            <person name="Richardson P."/>
            <person name="Huber H."/>
            <person name="Kyrpides N.C."/>
        </authorList>
    </citation>
    <scope>NUCLEOTIDE SEQUENCE [LARGE SCALE GENOMIC DNA]</scope>
    <source>
        <strain>ATCC 43588 / DSM 3639 / JCM 9404 / F1</strain>
    </source>
</reference>
<comment type="function">
    <text evidence="1">Catalyzes the attachment of alanine to tRNA(Ala) in a two-step reaction: alanine is first activated by ATP to form Ala-AMP and then transferred to the acceptor end of tRNA(Ala). Also edits incorrectly charged Ser-tRNA(Ala) and Gly-tRNA(Ala) via its editing domain.</text>
</comment>
<comment type="catalytic activity">
    <reaction evidence="1">
        <text>tRNA(Ala) + L-alanine + ATP = L-alanyl-tRNA(Ala) + AMP + diphosphate</text>
        <dbReference type="Rhea" id="RHEA:12540"/>
        <dbReference type="Rhea" id="RHEA-COMP:9657"/>
        <dbReference type="Rhea" id="RHEA-COMP:9923"/>
        <dbReference type="ChEBI" id="CHEBI:30616"/>
        <dbReference type="ChEBI" id="CHEBI:33019"/>
        <dbReference type="ChEBI" id="CHEBI:57972"/>
        <dbReference type="ChEBI" id="CHEBI:78442"/>
        <dbReference type="ChEBI" id="CHEBI:78497"/>
        <dbReference type="ChEBI" id="CHEBI:456215"/>
        <dbReference type="EC" id="6.1.1.7"/>
    </reaction>
</comment>
<comment type="cofactor">
    <cofactor evidence="1">
        <name>Zn(2+)</name>
        <dbReference type="ChEBI" id="CHEBI:29105"/>
    </cofactor>
    <text evidence="1">Binds 1 zinc ion per subunit.</text>
</comment>
<comment type="subcellular location">
    <subcellularLocation>
        <location evidence="1">Cytoplasm</location>
    </subcellularLocation>
</comment>
<comment type="domain">
    <text evidence="1">Consists of three domains; the N-terminal catalytic domain, the editing domain and the C-terminal C-Ala domain. The editing domain removes incorrectly charged amino acids, while the C-Ala domain, along with tRNA(Ala), serves as a bridge to cooperatively bring together the editing and aminoacylation centers thus stimulating deacylation of misacylated tRNAs.</text>
</comment>
<comment type="similarity">
    <text evidence="1">Belongs to the class-II aminoacyl-tRNA synthetase family.</text>
</comment>
<name>SYA_STAMF</name>
<proteinExistence type="inferred from homology"/>
<gene>
    <name evidence="1" type="primary">alaS</name>
    <name type="ordered locus">Smar_1097</name>
</gene>
<organism>
    <name type="scientific">Staphylothermus marinus (strain ATCC 43588 / DSM 3639 / JCM 9404 / F1)</name>
    <dbReference type="NCBI Taxonomy" id="399550"/>
    <lineage>
        <taxon>Archaea</taxon>
        <taxon>Thermoproteota</taxon>
        <taxon>Thermoprotei</taxon>
        <taxon>Desulfurococcales</taxon>
        <taxon>Desulfurococcaceae</taxon>
        <taxon>Staphylothermus</taxon>
    </lineage>
</organism>